<evidence type="ECO:0000255" key="1">
    <source>
        <dbReference type="HAMAP-Rule" id="MF_00332"/>
    </source>
</evidence>
<evidence type="ECO:0000256" key="2">
    <source>
        <dbReference type="SAM" id="MobiDB-lite"/>
    </source>
</evidence>
<name>DNAK_FRATW</name>
<dbReference type="EMBL" id="CP000608">
    <property type="protein sequence ID" value="ABO46480.1"/>
    <property type="molecule type" value="Genomic_DNA"/>
</dbReference>
<dbReference type="RefSeq" id="WP_003025465.1">
    <property type="nucleotide sequence ID" value="NC_009257.1"/>
</dbReference>
<dbReference type="SMR" id="A4IX28"/>
<dbReference type="KEGG" id="ftw:FTW_0571"/>
<dbReference type="HOGENOM" id="CLU_005965_2_1_6"/>
<dbReference type="GO" id="GO:0005524">
    <property type="term" value="F:ATP binding"/>
    <property type="evidence" value="ECO:0007669"/>
    <property type="project" value="UniProtKB-UniRule"/>
</dbReference>
<dbReference type="GO" id="GO:0140662">
    <property type="term" value="F:ATP-dependent protein folding chaperone"/>
    <property type="evidence" value="ECO:0007669"/>
    <property type="project" value="InterPro"/>
</dbReference>
<dbReference type="GO" id="GO:0051082">
    <property type="term" value="F:unfolded protein binding"/>
    <property type="evidence" value="ECO:0007669"/>
    <property type="project" value="InterPro"/>
</dbReference>
<dbReference type="CDD" id="cd10234">
    <property type="entry name" value="ASKHA_NBD_HSP70_DnaK-like"/>
    <property type="match status" value="1"/>
</dbReference>
<dbReference type="FunFam" id="2.60.34.10:FF:000014">
    <property type="entry name" value="Chaperone protein DnaK HSP70"/>
    <property type="match status" value="1"/>
</dbReference>
<dbReference type="FunFam" id="1.20.1270.10:FF:000001">
    <property type="entry name" value="Molecular chaperone DnaK"/>
    <property type="match status" value="1"/>
</dbReference>
<dbReference type="FunFam" id="3.30.420.40:FF:000004">
    <property type="entry name" value="Molecular chaperone DnaK"/>
    <property type="match status" value="1"/>
</dbReference>
<dbReference type="FunFam" id="3.90.640.10:FF:000003">
    <property type="entry name" value="Molecular chaperone DnaK"/>
    <property type="match status" value="1"/>
</dbReference>
<dbReference type="Gene3D" id="1.20.1270.10">
    <property type="match status" value="1"/>
</dbReference>
<dbReference type="Gene3D" id="3.30.420.40">
    <property type="match status" value="2"/>
</dbReference>
<dbReference type="Gene3D" id="3.90.640.10">
    <property type="entry name" value="Actin, Chain A, domain 4"/>
    <property type="match status" value="1"/>
</dbReference>
<dbReference type="Gene3D" id="2.60.34.10">
    <property type="entry name" value="Substrate Binding Domain Of DNAk, Chain A, domain 1"/>
    <property type="match status" value="1"/>
</dbReference>
<dbReference type="HAMAP" id="MF_00332">
    <property type="entry name" value="DnaK"/>
    <property type="match status" value="1"/>
</dbReference>
<dbReference type="InterPro" id="IPR043129">
    <property type="entry name" value="ATPase_NBD"/>
</dbReference>
<dbReference type="InterPro" id="IPR012725">
    <property type="entry name" value="Chaperone_DnaK"/>
</dbReference>
<dbReference type="InterPro" id="IPR018181">
    <property type="entry name" value="Heat_shock_70_CS"/>
</dbReference>
<dbReference type="InterPro" id="IPR029048">
    <property type="entry name" value="HSP70_C_sf"/>
</dbReference>
<dbReference type="InterPro" id="IPR029047">
    <property type="entry name" value="HSP70_peptide-bd_sf"/>
</dbReference>
<dbReference type="InterPro" id="IPR013126">
    <property type="entry name" value="Hsp_70_fam"/>
</dbReference>
<dbReference type="NCBIfam" id="NF001413">
    <property type="entry name" value="PRK00290.1"/>
    <property type="match status" value="1"/>
</dbReference>
<dbReference type="NCBIfam" id="NF003520">
    <property type="entry name" value="PRK05183.1"/>
    <property type="match status" value="1"/>
</dbReference>
<dbReference type="NCBIfam" id="TIGR02350">
    <property type="entry name" value="prok_dnaK"/>
    <property type="match status" value="1"/>
</dbReference>
<dbReference type="PANTHER" id="PTHR19375">
    <property type="entry name" value="HEAT SHOCK PROTEIN 70KDA"/>
    <property type="match status" value="1"/>
</dbReference>
<dbReference type="Pfam" id="PF00012">
    <property type="entry name" value="HSP70"/>
    <property type="match status" value="1"/>
</dbReference>
<dbReference type="PRINTS" id="PR00301">
    <property type="entry name" value="HEATSHOCK70"/>
</dbReference>
<dbReference type="SUPFAM" id="SSF53067">
    <property type="entry name" value="Actin-like ATPase domain"/>
    <property type="match status" value="2"/>
</dbReference>
<dbReference type="SUPFAM" id="SSF100934">
    <property type="entry name" value="Heat shock protein 70kD (HSP70), C-terminal subdomain"/>
    <property type="match status" value="1"/>
</dbReference>
<dbReference type="SUPFAM" id="SSF100920">
    <property type="entry name" value="Heat shock protein 70kD (HSP70), peptide-binding domain"/>
    <property type="match status" value="1"/>
</dbReference>
<dbReference type="PROSITE" id="PS00297">
    <property type="entry name" value="HSP70_1"/>
    <property type="match status" value="1"/>
</dbReference>
<dbReference type="PROSITE" id="PS00329">
    <property type="entry name" value="HSP70_2"/>
    <property type="match status" value="1"/>
</dbReference>
<dbReference type="PROSITE" id="PS01036">
    <property type="entry name" value="HSP70_3"/>
    <property type="match status" value="1"/>
</dbReference>
<feature type="chain" id="PRO_1000059566" description="Chaperone protein DnaK">
    <location>
        <begin position="1"/>
        <end position="642"/>
    </location>
</feature>
<feature type="region of interest" description="Disordered" evidence="2">
    <location>
        <begin position="614"/>
        <end position="642"/>
    </location>
</feature>
<feature type="compositionally biased region" description="Acidic residues" evidence="2">
    <location>
        <begin position="628"/>
        <end position="642"/>
    </location>
</feature>
<feature type="modified residue" description="Phosphothreonine; by autocatalysis" evidence="1">
    <location>
        <position position="201"/>
    </location>
</feature>
<reference key="1">
    <citation type="journal article" date="2007" name="PLoS ONE">
        <title>Complete genomic characterization of a pathogenic A.II strain of Francisella tularensis subspecies tularensis.</title>
        <authorList>
            <person name="Beckstrom-Sternberg S.M."/>
            <person name="Auerbach R.K."/>
            <person name="Godbole S."/>
            <person name="Pearson J.V."/>
            <person name="Beckstrom-Sternberg J.S."/>
            <person name="Deng Z."/>
            <person name="Munk C."/>
            <person name="Kubota K."/>
            <person name="Zhou Y."/>
            <person name="Bruce D."/>
            <person name="Noronha J."/>
            <person name="Scheuermann R.H."/>
            <person name="Wang A."/>
            <person name="Wei X."/>
            <person name="Wang J."/>
            <person name="Hao J."/>
            <person name="Wagner D.M."/>
            <person name="Brettin T.S."/>
            <person name="Brown N."/>
            <person name="Gilna P."/>
            <person name="Keim P.S."/>
        </authorList>
    </citation>
    <scope>NUCLEOTIDE SEQUENCE [LARGE SCALE GENOMIC DNA]</scope>
    <source>
        <strain>WY96-3418</strain>
    </source>
</reference>
<accession>A4IX28</accession>
<keyword id="KW-0067">ATP-binding</keyword>
<keyword id="KW-0143">Chaperone</keyword>
<keyword id="KW-0547">Nucleotide-binding</keyword>
<keyword id="KW-0597">Phosphoprotein</keyword>
<keyword id="KW-0346">Stress response</keyword>
<gene>
    <name evidence="1" type="primary">dnaK</name>
    <name type="ordered locus">FTW_0571</name>
</gene>
<sequence>MGKIIGIDLGTTNSCLAIMDGKTAKVIENAEGHRTTPSVVAYTDSGEILVGQAAKRQAVTNPDNTFFAIKRLIGRKYDDKAVQEDIKKKVPYAVIKADNGDAWVATKEGKKMAPPQVSAEVLRKMKKTAEDYLGEPVTEAVITVPAYFNDSQRQATKDAGKIAGLEVKRIINEPTAAALAYGVDSKKGEQTVAVYDLGGGTFDISIIEIADVDGDNQIEVLSTNGDTFLGGEDFDLALMNYLIDEFKKEQGIDLHNDKLALQRVREAAEKAKVELSSAQQTDVNLPYITADATGPKHLNIKVTRAKFESLVSDLVMRSLEPCKKALEDAGLSKSDITEVLLVGGQTRMPLVQEKVKEFFGKEPRKDVNPDEAVAVGAAIQGGVLSGDVKDILLLDVTPLSLGIETMGGVMTKLIERNTTIPTKKSQVFSTAEDNQPAVTIHVLQGEREMASANKSLGRFDLADIPPAPRGMPQIEVTFDIDANGILNVSAKDKATGKEQNIVIKSSSGLSEEDIEKMVQDAEANAEADKKFHDLVTARNTADNLIHSSRKAIQELGDKVTAAEKEKIEEACKELEAATKGDDKQAIEAKTKALEEAFAPIAQKAYAEQAQAAVAQGGAKAEEPKKEEDVVDADFEDVEDDKK</sequence>
<protein>
    <recommendedName>
        <fullName evidence="1">Chaperone protein DnaK</fullName>
    </recommendedName>
    <alternativeName>
        <fullName evidence="1">HSP70</fullName>
    </alternativeName>
    <alternativeName>
        <fullName evidence="1">Heat shock 70 kDa protein</fullName>
    </alternativeName>
    <alternativeName>
        <fullName evidence="1">Heat shock protein 70</fullName>
    </alternativeName>
</protein>
<comment type="function">
    <text evidence="1">Acts as a chaperone.</text>
</comment>
<comment type="induction">
    <text evidence="1">By stress conditions e.g. heat shock.</text>
</comment>
<comment type="similarity">
    <text evidence="1">Belongs to the heat shock protein 70 family.</text>
</comment>
<proteinExistence type="inferred from homology"/>
<organism>
    <name type="scientific">Francisella tularensis subsp. tularensis (strain WY96-3418)</name>
    <dbReference type="NCBI Taxonomy" id="418136"/>
    <lineage>
        <taxon>Bacteria</taxon>
        <taxon>Pseudomonadati</taxon>
        <taxon>Pseudomonadota</taxon>
        <taxon>Gammaproteobacteria</taxon>
        <taxon>Thiotrichales</taxon>
        <taxon>Francisellaceae</taxon>
        <taxon>Francisella</taxon>
    </lineage>
</organism>